<accession>B7MTA1</accession>
<dbReference type="EC" id="1.8.4.11" evidence="1"/>
<dbReference type="EMBL" id="CU928162">
    <property type="protein sequence ID" value="CAR11177.2"/>
    <property type="molecule type" value="Genomic_DNA"/>
</dbReference>
<dbReference type="RefSeq" id="WP_001305659.1">
    <property type="nucleotide sequence ID" value="NC_011745.1"/>
</dbReference>
<dbReference type="SMR" id="B7MTA1"/>
<dbReference type="KEGG" id="ecq:ECED1_5077"/>
<dbReference type="HOGENOM" id="CLU_031040_10_3_6"/>
<dbReference type="Proteomes" id="UP000000748">
    <property type="component" value="Chromosome"/>
</dbReference>
<dbReference type="GO" id="GO:0005737">
    <property type="term" value="C:cytoplasm"/>
    <property type="evidence" value="ECO:0007669"/>
    <property type="project" value="TreeGrafter"/>
</dbReference>
<dbReference type="GO" id="GO:0036456">
    <property type="term" value="F:L-methionine-(S)-S-oxide reductase activity"/>
    <property type="evidence" value="ECO:0007669"/>
    <property type="project" value="TreeGrafter"/>
</dbReference>
<dbReference type="GO" id="GO:0008113">
    <property type="term" value="F:peptide-methionine (S)-S-oxide reductase activity"/>
    <property type="evidence" value="ECO:0007669"/>
    <property type="project" value="UniProtKB-UniRule"/>
</dbReference>
<dbReference type="GO" id="GO:0034599">
    <property type="term" value="P:cellular response to oxidative stress"/>
    <property type="evidence" value="ECO:0007669"/>
    <property type="project" value="TreeGrafter"/>
</dbReference>
<dbReference type="GO" id="GO:0036211">
    <property type="term" value="P:protein modification process"/>
    <property type="evidence" value="ECO:0007669"/>
    <property type="project" value="UniProtKB-UniRule"/>
</dbReference>
<dbReference type="FunFam" id="3.30.1060.10:FF:000001">
    <property type="entry name" value="Peptide methionine sulfoxide reductase MsrA"/>
    <property type="match status" value="1"/>
</dbReference>
<dbReference type="Gene3D" id="3.30.1060.10">
    <property type="entry name" value="Peptide methionine sulphoxide reductase MsrA"/>
    <property type="match status" value="1"/>
</dbReference>
<dbReference type="HAMAP" id="MF_01401">
    <property type="entry name" value="MsrA"/>
    <property type="match status" value="1"/>
</dbReference>
<dbReference type="InterPro" id="IPR002569">
    <property type="entry name" value="Met_Sox_Rdtase_MsrA_dom"/>
</dbReference>
<dbReference type="InterPro" id="IPR036509">
    <property type="entry name" value="Met_Sox_Rdtase_MsrA_sf"/>
</dbReference>
<dbReference type="InterPro" id="IPR050162">
    <property type="entry name" value="MsrA_MetSO_reductase"/>
</dbReference>
<dbReference type="NCBIfam" id="TIGR00401">
    <property type="entry name" value="msrA"/>
    <property type="match status" value="1"/>
</dbReference>
<dbReference type="PANTHER" id="PTHR42799">
    <property type="entry name" value="MITOCHONDRIAL PEPTIDE METHIONINE SULFOXIDE REDUCTASE"/>
    <property type="match status" value="1"/>
</dbReference>
<dbReference type="PANTHER" id="PTHR42799:SF2">
    <property type="entry name" value="MITOCHONDRIAL PEPTIDE METHIONINE SULFOXIDE REDUCTASE"/>
    <property type="match status" value="1"/>
</dbReference>
<dbReference type="Pfam" id="PF01625">
    <property type="entry name" value="PMSR"/>
    <property type="match status" value="1"/>
</dbReference>
<dbReference type="SUPFAM" id="SSF55068">
    <property type="entry name" value="Peptide methionine sulfoxide reductase"/>
    <property type="match status" value="1"/>
</dbReference>
<keyword id="KW-0560">Oxidoreductase</keyword>
<protein>
    <recommendedName>
        <fullName evidence="1">Peptide methionine sulfoxide reductase MsrA</fullName>
        <shortName evidence="1">Protein-methionine-S-oxide reductase</shortName>
        <ecNumber evidence="1">1.8.4.11</ecNumber>
    </recommendedName>
    <alternativeName>
        <fullName evidence="1">Peptide-methionine (S)-S-oxide reductase</fullName>
        <shortName evidence="1">Peptide Met(O) reductase</shortName>
    </alternativeName>
</protein>
<evidence type="ECO:0000255" key="1">
    <source>
        <dbReference type="HAMAP-Rule" id="MF_01401"/>
    </source>
</evidence>
<organism>
    <name type="scientific">Escherichia coli O81 (strain ED1a)</name>
    <dbReference type="NCBI Taxonomy" id="585397"/>
    <lineage>
        <taxon>Bacteria</taxon>
        <taxon>Pseudomonadati</taxon>
        <taxon>Pseudomonadota</taxon>
        <taxon>Gammaproteobacteria</taxon>
        <taxon>Enterobacterales</taxon>
        <taxon>Enterobacteriaceae</taxon>
        <taxon>Escherichia</taxon>
    </lineage>
</organism>
<feature type="chain" id="PRO_1000184563" description="Peptide methionine sulfoxide reductase MsrA">
    <location>
        <begin position="1"/>
        <end position="212"/>
    </location>
</feature>
<feature type="active site" evidence="1">
    <location>
        <position position="52"/>
    </location>
</feature>
<comment type="function">
    <text evidence="1">Has an important function as a repair enzyme for proteins that have been inactivated by oxidation. Catalyzes the reversible oxidation-reduction of methionine sulfoxide in proteins to methionine.</text>
</comment>
<comment type="catalytic activity">
    <reaction evidence="1">
        <text>L-methionyl-[protein] + [thioredoxin]-disulfide + H2O = L-methionyl-(S)-S-oxide-[protein] + [thioredoxin]-dithiol</text>
        <dbReference type="Rhea" id="RHEA:14217"/>
        <dbReference type="Rhea" id="RHEA-COMP:10698"/>
        <dbReference type="Rhea" id="RHEA-COMP:10700"/>
        <dbReference type="Rhea" id="RHEA-COMP:12313"/>
        <dbReference type="Rhea" id="RHEA-COMP:12315"/>
        <dbReference type="ChEBI" id="CHEBI:15377"/>
        <dbReference type="ChEBI" id="CHEBI:16044"/>
        <dbReference type="ChEBI" id="CHEBI:29950"/>
        <dbReference type="ChEBI" id="CHEBI:44120"/>
        <dbReference type="ChEBI" id="CHEBI:50058"/>
        <dbReference type="EC" id="1.8.4.11"/>
    </reaction>
</comment>
<comment type="catalytic activity">
    <reaction evidence="1">
        <text>[thioredoxin]-disulfide + L-methionine + H2O = L-methionine (S)-S-oxide + [thioredoxin]-dithiol</text>
        <dbReference type="Rhea" id="RHEA:19993"/>
        <dbReference type="Rhea" id="RHEA-COMP:10698"/>
        <dbReference type="Rhea" id="RHEA-COMP:10700"/>
        <dbReference type="ChEBI" id="CHEBI:15377"/>
        <dbReference type="ChEBI" id="CHEBI:29950"/>
        <dbReference type="ChEBI" id="CHEBI:50058"/>
        <dbReference type="ChEBI" id="CHEBI:57844"/>
        <dbReference type="ChEBI" id="CHEBI:58772"/>
        <dbReference type="EC" id="1.8.4.11"/>
    </reaction>
</comment>
<comment type="similarity">
    <text evidence="1">Belongs to the MsrA Met sulfoxide reductase family.</text>
</comment>
<sequence>MSLFDKKHLVSPADALPGRNTPMPVATLHAVNGHSMTNVPDGMEIAIFAMGCFWGVERLFWQLPGVYSTAAGYTGGYTPNPTYREVCSGDTGHAEAVRIVYDPSVISYEQLLQVFWENHDPAQGMRQGNDHGTQYRSAIYPLTPEQDAAARASLERFQAAMLAADDDRRITTEIANATPFYYAEDDHQQYLHKNPYGYCGIGGIGVCLPPEA</sequence>
<gene>
    <name evidence="1" type="primary">msrA</name>
    <name type="ordered locus">ECED1_5077</name>
</gene>
<name>MSRA_ECO81</name>
<proteinExistence type="inferred from homology"/>
<reference key="1">
    <citation type="journal article" date="2009" name="PLoS Genet.">
        <title>Organised genome dynamics in the Escherichia coli species results in highly diverse adaptive paths.</title>
        <authorList>
            <person name="Touchon M."/>
            <person name="Hoede C."/>
            <person name="Tenaillon O."/>
            <person name="Barbe V."/>
            <person name="Baeriswyl S."/>
            <person name="Bidet P."/>
            <person name="Bingen E."/>
            <person name="Bonacorsi S."/>
            <person name="Bouchier C."/>
            <person name="Bouvet O."/>
            <person name="Calteau A."/>
            <person name="Chiapello H."/>
            <person name="Clermont O."/>
            <person name="Cruveiller S."/>
            <person name="Danchin A."/>
            <person name="Diard M."/>
            <person name="Dossat C."/>
            <person name="Karoui M.E."/>
            <person name="Frapy E."/>
            <person name="Garry L."/>
            <person name="Ghigo J.M."/>
            <person name="Gilles A.M."/>
            <person name="Johnson J."/>
            <person name="Le Bouguenec C."/>
            <person name="Lescat M."/>
            <person name="Mangenot S."/>
            <person name="Martinez-Jehanne V."/>
            <person name="Matic I."/>
            <person name="Nassif X."/>
            <person name="Oztas S."/>
            <person name="Petit M.A."/>
            <person name="Pichon C."/>
            <person name="Rouy Z."/>
            <person name="Ruf C.S."/>
            <person name="Schneider D."/>
            <person name="Tourret J."/>
            <person name="Vacherie B."/>
            <person name="Vallenet D."/>
            <person name="Medigue C."/>
            <person name="Rocha E.P.C."/>
            <person name="Denamur E."/>
        </authorList>
    </citation>
    <scope>NUCLEOTIDE SEQUENCE [LARGE SCALE GENOMIC DNA]</scope>
    <source>
        <strain>ED1a</strain>
    </source>
</reference>